<dbReference type="EC" id="4.3.2.10" evidence="1"/>
<dbReference type="EMBL" id="CP000026">
    <property type="protein sequence ID" value="AAV76787.1"/>
    <property type="molecule type" value="Genomic_DNA"/>
</dbReference>
<dbReference type="RefSeq" id="WP_000880125.1">
    <property type="nucleotide sequence ID" value="NC_006511.1"/>
</dbReference>
<dbReference type="SMR" id="Q5PDN6"/>
<dbReference type="KEGG" id="spt:SPA0794"/>
<dbReference type="HOGENOM" id="CLU_048577_4_0_6"/>
<dbReference type="UniPathway" id="UPA00031">
    <property type="reaction ID" value="UER00010"/>
</dbReference>
<dbReference type="Proteomes" id="UP000008185">
    <property type="component" value="Chromosome"/>
</dbReference>
<dbReference type="GO" id="GO:0005737">
    <property type="term" value="C:cytoplasm"/>
    <property type="evidence" value="ECO:0007669"/>
    <property type="project" value="UniProtKB-SubCell"/>
</dbReference>
<dbReference type="GO" id="GO:0000107">
    <property type="term" value="F:imidazoleglycerol-phosphate synthase activity"/>
    <property type="evidence" value="ECO:0007669"/>
    <property type="project" value="UniProtKB-UniRule"/>
</dbReference>
<dbReference type="GO" id="GO:0016829">
    <property type="term" value="F:lyase activity"/>
    <property type="evidence" value="ECO:0007669"/>
    <property type="project" value="UniProtKB-KW"/>
</dbReference>
<dbReference type="GO" id="GO:0000105">
    <property type="term" value="P:L-histidine biosynthetic process"/>
    <property type="evidence" value="ECO:0007669"/>
    <property type="project" value="UniProtKB-UniRule"/>
</dbReference>
<dbReference type="CDD" id="cd04731">
    <property type="entry name" value="HisF"/>
    <property type="match status" value="1"/>
</dbReference>
<dbReference type="FunFam" id="3.20.20.70:FF:000006">
    <property type="entry name" value="Imidazole glycerol phosphate synthase subunit HisF"/>
    <property type="match status" value="1"/>
</dbReference>
<dbReference type="Gene3D" id="3.20.20.70">
    <property type="entry name" value="Aldolase class I"/>
    <property type="match status" value="1"/>
</dbReference>
<dbReference type="HAMAP" id="MF_01013">
    <property type="entry name" value="HisF"/>
    <property type="match status" value="1"/>
</dbReference>
<dbReference type="InterPro" id="IPR013785">
    <property type="entry name" value="Aldolase_TIM"/>
</dbReference>
<dbReference type="InterPro" id="IPR006062">
    <property type="entry name" value="His_biosynth"/>
</dbReference>
<dbReference type="InterPro" id="IPR004651">
    <property type="entry name" value="HisF"/>
</dbReference>
<dbReference type="InterPro" id="IPR050064">
    <property type="entry name" value="IGPS_HisA/HisF"/>
</dbReference>
<dbReference type="InterPro" id="IPR011060">
    <property type="entry name" value="RibuloseP-bd_barrel"/>
</dbReference>
<dbReference type="NCBIfam" id="TIGR00735">
    <property type="entry name" value="hisF"/>
    <property type="match status" value="1"/>
</dbReference>
<dbReference type="PANTHER" id="PTHR21235:SF2">
    <property type="entry name" value="IMIDAZOLE GLYCEROL PHOSPHATE SYNTHASE HISHF"/>
    <property type="match status" value="1"/>
</dbReference>
<dbReference type="PANTHER" id="PTHR21235">
    <property type="entry name" value="IMIDAZOLE GLYCEROL PHOSPHATE SYNTHASE SUBUNIT HISF/H IGP SYNTHASE SUBUNIT HISF/H"/>
    <property type="match status" value="1"/>
</dbReference>
<dbReference type="Pfam" id="PF00977">
    <property type="entry name" value="His_biosynth"/>
    <property type="match status" value="1"/>
</dbReference>
<dbReference type="SUPFAM" id="SSF51366">
    <property type="entry name" value="Ribulose-phoshate binding barrel"/>
    <property type="match status" value="1"/>
</dbReference>
<name>HIS6_SALPA</name>
<organism>
    <name type="scientific">Salmonella paratyphi A (strain ATCC 9150 / SARB42)</name>
    <dbReference type="NCBI Taxonomy" id="295319"/>
    <lineage>
        <taxon>Bacteria</taxon>
        <taxon>Pseudomonadati</taxon>
        <taxon>Pseudomonadota</taxon>
        <taxon>Gammaproteobacteria</taxon>
        <taxon>Enterobacterales</taxon>
        <taxon>Enterobacteriaceae</taxon>
        <taxon>Salmonella</taxon>
    </lineage>
</organism>
<sequence>MLAKRIIPCLDVRDGQVVKGVQFRNHEIIGDIVPLAKRYADEGADELVFYDITASSDGRVVDKSWVARVAEVIDIPFCVAGGIRSIDDAAKILSFGADKISINSPALADPTLITRLADRFGVQCIVVGIDTWFDDATGKYHVNQYTGDENRTRVTQWETLDWVQEVQQRGAGEIVLNMMNQDGVRNGYDLTQLKKVRDVCRVPLIASGGAGTMEHFLEAFRDADVDGALAASVFHKQIINIGELKAYLAGQGVEIRIC</sequence>
<protein>
    <recommendedName>
        <fullName evidence="1">Imidazole glycerol phosphate synthase subunit HisF</fullName>
        <ecNumber evidence="1">4.3.2.10</ecNumber>
    </recommendedName>
    <alternativeName>
        <fullName evidence="1">IGP synthase cyclase subunit</fullName>
    </alternativeName>
    <alternativeName>
        <fullName evidence="1">IGP synthase subunit HisF</fullName>
    </alternativeName>
    <alternativeName>
        <fullName evidence="1">ImGP synthase subunit HisF</fullName>
        <shortName evidence="1">IGPS subunit HisF</shortName>
    </alternativeName>
</protein>
<feature type="chain" id="PRO_0000142223" description="Imidazole glycerol phosphate synthase subunit HisF">
    <location>
        <begin position="1"/>
        <end position="258"/>
    </location>
</feature>
<feature type="active site" evidence="1">
    <location>
        <position position="11"/>
    </location>
</feature>
<feature type="active site" evidence="1">
    <location>
        <position position="130"/>
    </location>
</feature>
<proteinExistence type="inferred from homology"/>
<accession>Q5PDN6</accession>
<gene>
    <name evidence="1" type="primary">hisF</name>
    <name type="ordered locus">SPA0794</name>
</gene>
<evidence type="ECO:0000255" key="1">
    <source>
        <dbReference type="HAMAP-Rule" id="MF_01013"/>
    </source>
</evidence>
<keyword id="KW-0028">Amino-acid biosynthesis</keyword>
<keyword id="KW-0963">Cytoplasm</keyword>
<keyword id="KW-0368">Histidine biosynthesis</keyword>
<keyword id="KW-0456">Lyase</keyword>
<comment type="function">
    <text evidence="1">IGPS catalyzes the conversion of PRFAR and glutamine to IGP, AICAR and glutamate. The HisF subunit catalyzes the cyclization activity that produces IGP and AICAR from PRFAR using the ammonia provided by the HisH subunit.</text>
</comment>
<comment type="catalytic activity">
    <reaction evidence="1">
        <text>5-[(5-phospho-1-deoxy-D-ribulos-1-ylimino)methylamino]-1-(5-phospho-beta-D-ribosyl)imidazole-4-carboxamide + L-glutamine = D-erythro-1-(imidazol-4-yl)glycerol 3-phosphate + 5-amino-1-(5-phospho-beta-D-ribosyl)imidazole-4-carboxamide + L-glutamate + H(+)</text>
        <dbReference type="Rhea" id="RHEA:24793"/>
        <dbReference type="ChEBI" id="CHEBI:15378"/>
        <dbReference type="ChEBI" id="CHEBI:29985"/>
        <dbReference type="ChEBI" id="CHEBI:58278"/>
        <dbReference type="ChEBI" id="CHEBI:58359"/>
        <dbReference type="ChEBI" id="CHEBI:58475"/>
        <dbReference type="ChEBI" id="CHEBI:58525"/>
        <dbReference type="EC" id="4.3.2.10"/>
    </reaction>
</comment>
<comment type="pathway">
    <text evidence="1">Amino-acid biosynthesis; L-histidine biosynthesis; L-histidine from 5-phospho-alpha-D-ribose 1-diphosphate: step 5/9.</text>
</comment>
<comment type="subunit">
    <text evidence="1">Heterodimer of HisH and HisF.</text>
</comment>
<comment type="subcellular location">
    <subcellularLocation>
        <location evidence="1">Cytoplasm</location>
    </subcellularLocation>
</comment>
<comment type="similarity">
    <text evidence="1">Belongs to the HisA/HisF family.</text>
</comment>
<reference key="1">
    <citation type="journal article" date="2004" name="Nat. Genet.">
        <title>Comparison of genome degradation in Paratyphi A and Typhi, human-restricted serovars of Salmonella enterica that cause typhoid.</title>
        <authorList>
            <person name="McClelland M."/>
            <person name="Sanderson K.E."/>
            <person name="Clifton S.W."/>
            <person name="Latreille P."/>
            <person name="Porwollik S."/>
            <person name="Sabo A."/>
            <person name="Meyer R."/>
            <person name="Bieri T."/>
            <person name="Ozersky P."/>
            <person name="McLellan M."/>
            <person name="Harkins C.R."/>
            <person name="Wang C."/>
            <person name="Nguyen C."/>
            <person name="Berghoff A."/>
            <person name="Elliott G."/>
            <person name="Kohlberg S."/>
            <person name="Strong C."/>
            <person name="Du F."/>
            <person name="Carter J."/>
            <person name="Kremizki C."/>
            <person name="Layman D."/>
            <person name="Leonard S."/>
            <person name="Sun H."/>
            <person name="Fulton L."/>
            <person name="Nash W."/>
            <person name="Miner T."/>
            <person name="Minx P."/>
            <person name="Delehaunty K."/>
            <person name="Fronick C."/>
            <person name="Magrini V."/>
            <person name="Nhan M."/>
            <person name="Warren W."/>
            <person name="Florea L."/>
            <person name="Spieth J."/>
            <person name="Wilson R.K."/>
        </authorList>
    </citation>
    <scope>NUCLEOTIDE SEQUENCE [LARGE SCALE GENOMIC DNA]</scope>
    <source>
        <strain>ATCC 9150 / SARB42</strain>
    </source>
</reference>